<reference key="1">
    <citation type="submission" date="2006-03" db="EMBL/GenBank/DDBJ databases">
        <title>Complete sequence of Rhodopseudomonas palustris BisB5.</title>
        <authorList>
            <consortium name="US DOE Joint Genome Institute"/>
            <person name="Copeland A."/>
            <person name="Lucas S."/>
            <person name="Lapidus A."/>
            <person name="Barry K."/>
            <person name="Detter J.C."/>
            <person name="Glavina del Rio T."/>
            <person name="Hammon N."/>
            <person name="Israni S."/>
            <person name="Dalin E."/>
            <person name="Tice H."/>
            <person name="Pitluck S."/>
            <person name="Chain P."/>
            <person name="Malfatti S."/>
            <person name="Shin M."/>
            <person name="Vergez L."/>
            <person name="Schmutz J."/>
            <person name="Larimer F."/>
            <person name="Land M."/>
            <person name="Hauser L."/>
            <person name="Pelletier D.A."/>
            <person name="Kyrpides N."/>
            <person name="Lykidis A."/>
            <person name="Oda Y."/>
            <person name="Harwood C.S."/>
            <person name="Richardson P."/>
        </authorList>
    </citation>
    <scope>NUCLEOTIDE SEQUENCE [LARGE SCALE GENOMIC DNA]</scope>
    <source>
        <strain>BisB5</strain>
    </source>
</reference>
<comment type="function">
    <text evidence="1">Catalyzes the decarboxylation of four acetate groups of uroporphyrinogen-III to yield coproporphyrinogen-III.</text>
</comment>
<comment type="catalytic activity">
    <reaction evidence="1">
        <text>uroporphyrinogen III + 4 H(+) = coproporphyrinogen III + 4 CO2</text>
        <dbReference type="Rhea" id="RHEA:19865"/>
        <dbReference type="ChEBI" id="CHEBI:15378"/>
        <dbReference type="ChEBI" id="CHEBI:16526"/>
        <dbReference type="ChEBI" id="CHEBI:57308"/>
        <dbReference type="ChEBI" id="CHEBI:57309"/>
        <dbReference type="EC" id="4.1.1.37"/>
    </reaction>
</comment>
<comment type="pathway">
    <text evidence="1">Porphyrin-containing compound metabolism; protoporphyrin-IX biosynthesis; coproporphyrinogen-III from 5-aminolevulinate: step 4/4.</text>
</comment>
<comment type="subunit">
    <text evidence="1">Homodimer.</text>
</comment>
<comment type="subcellular location">
    <subcellularLocation>
        <location evidence="1">Cytoplasm</location>
    </subcellularLocation>
</comment>
<comment type="similarity">
    <text evidence="1">Belongs to the uroporphyrinogen decarboxylase family.</text>
</comment>
<proteinExistence type="inferred from homology"/>
<evidence type="ECO:0000255" key="1">
    <source>
        <dbReference type="HAMAP-Rule" id="MF_00218"/>
    </source>
</evidence>
<accession>Q132J9</accession>
<name>DCUP_RHOPS</name>
<feature type="chain" id="PRO_0000325684" description="Uroporphyrinogen decarboxylase">
    <location>
        <begin position="1"/>
        <end position="348"/>
    </location>
</feature>
<feature type="binding site" evidence="1">
    <location>
        <begin position="28"/>
        <end position="32"/>
    </location>
    <ligand>
        <name>substrate</name>
    </ligand>
</feature>
<feature type="binding site" evidence="1">
    <location>
        <position position="78"/>
    </location>
    <ligand>
        <name>substrate</name>
    </ligand>
</feature>
<feature type="binding site" evidence="1">
    <location>
        <position position="154"/>
    </location>
    <ligand>
        <name>substrate</name>
    </ligand>
</feature>
<feature type="binding site" evidence="1">
    <location>
        <position position="209"/>
    </location>
    <ligand>
        <name>substrate</name>
    </ligand>
</feature>
<feature type="binding site" evidence="1">
    <location>
        <position position="325"/>
    </location>
    <ligand>
        <name>substrate</name>
    </ligand>
</feature>
<feature type="site" description="Transition state stabilizer" evidence="1">
    <location>
        <position position="78"/>
    </location>
</feature>
<gene>
    <name evidence="1" type="primary">hemE</name>
    <name type="ordered locus">RPD_3769</name>
</gene>
<sequence length="348" mass="38116">MTQKLVTKPFIEVISGKRQASPPMWMMRQAGRYLPEYRATRTEAGSFLDLCFNPKLAAEVTLQPIRRFGFDAAIIFSDILVVPYALGRAVRFEVGEGPRLDPLNSPDLVGTLNGAIDLGKLEPVFEALRIVRSELAPETTLIGFCGAPFTVATYMVAGQGTSDQHPARLMAYQHPGAFAKIIDVLVESSIQYLLKQLEAGADVLQIFDTWGGILPPREFEKWCIEPTRRIVEGVRKVKPDAKIIGFPRGAGALLPAFIERTGVDAVSIDWTAEPKMVRDQVQTKVAVQGNLDPLLLIAGGSALDQGVDDVLKNFSAGRHIFNLGHGITPDASIAHVEQMVKRVRAFRG</sequence>
<organism>
    <name type="scientific">Rhodopseudomonas palustris (strain BisB5)</name>
    <dbReference type="NCBI Taxonomy" id="316057"/>
    <lineage>
        <taxon>Bacteria</taxon>
        <taxon>Pseudomonadati</taxon>
        <taxon>Pseudomonadota</taxon>
        <taxon>Alphaproteobacteria</taxon>
        <taxon>Hyphomicrobiales</taxon>
        <taxon>Nitrobacteraceae</taxon>
        <taxon>Rhodopseudomonas</taxon>
    </lineage>
</organism>
<keyword id="KW-0963">Cytoplasm</keyword>
<keyword id="KW-0210">Decarboxylase</keyword>
<keyword id="KW-0456">Lyase</keyword>
<keyword id="KW-0627">Porphyrin biosynthesis</keyword>
<dbReference type="EC" id="4.1.1.37" evidence="1"/>
<dbReference type="EMBL" id="CP000283">
    <property type="protein sequence ID" value="ABE40990.1"/>
    <property type="molecule type" value="Genomic_DNA"/>
</dbReference>
<dbReference type="SMR" id="Q132J9"/>
<dbReference type="STRING" id="316057.RPD_3769"/>
<dbReference type="KEGG" id="rpd:RPD_3769"/>
<dbReference type="eggNOG" id="COG0407">
    <property type="taxonomic scope" value="Bacteria"/>
</dbReference>
<dbReference type="HOGENOM" id="CLU_040933_0_0_5"/>
<dbReference type="UniPathway" id="UPA00251">
    <property type="reaction ID" value="UER00321"/>
</dbReference>
<dbReference type="Proteomes" id="UP000001818">
    <property type="component" value="Chromosome"/>
</dbReference>
<dbReference type="GO" id="GO:0005829">
    <property type="term" value="C:cytosol"/>
    <property type="evidence" value="ECO:0007669"/>
    <property type="project" value="TreeGrafter"/>
</dbReference>
<dbReference type="GO" id="GO:0004853">
    <property type="term" value="F:uroporphyrinogen decarboxylase activity"/>
    <property type="evidence" value="ECO:0007669"/>
    <property type="project" value="UniProtKB-UniRule"/>
</dbReference>
<dbReference type="GO" id="GO:0019353">
    <property type="term" value="P:protoporphyrinogen IX biosynthetic process from glutamate"/>
    <property type="evidence" value="ECO:0007669"/>
    <property type="project" value="TreeGrafter"/>
</dbReference>
<dbReference type="CDD" id="cd00717">
    <property type="entry name" value="URO-D"/>
    <property type="match status" value="1"/>
</dbReference>
<dbReference type="FunFam" id="3.20.20.210:FF:000007">
    <property type="entry name" value="Uroporphyrinogen decarboxylase"/>
    <property type="match status" value="1"/>
</dbReference>
<dbReference type="Gene3D" id="3.20.20.210">
    <property type="match status" value="1"/>
</dbReference>
<dbReference type="HAMAP" id="MF_00218">
    <property type="entry name" value="URO_D"/>
    <property type="match status" value="1"/>
</dbReference>
<dbReference type="InterPro" id="IPR038071">
    <property type="entry name" value="UROD/MetE-like_sf"/>
</dbReference>
<dbReference type="InterPro" id="IPR006361">
    <property type="entry name" value="Uroporphyrinogen_deCO2ase_HemE"/>
</dbReference>
<dbReference type="InterPro" id="IPR000257">
    <property type="entry name" value="Uroporphyrinogen_deCOase"/>
</dbReference>
<dbReference type="NCBIfam" id="TIGR01464">
    <property type="entry name" value="hemE"/>
    <property type="match status" value="1"/>
</dbReference>
<dbReference type="PANTHER" id="PTHR21091">
    <property type="entry name" value="METHYLTETRAHYDROFOLATE:HOMOCYSTEINE METHYLTRANSFERASE RELATED"/>
    <property type="match status" value="1"/>
</dbReference>
<dbReference type="PANTHER" id="PTHR21091:SF169">
    <property type="entry name" value="UROPORPHYRINOGEN DECARBOXYLASE"/>
    <property type="match status" value="1"/>
</dbReference>
<dbReference type="Pfam" id="PF01208">
    <property type="entry name" value="URO-D"/>
    <property type="match status" value="1"/>
</dbReference>
<dbReference type="SUPFAM" id="SSF51726">
    <property type="entry name" value="UROD/MetE-like"/>
    <property type="match status" value="1"/>
</dbReference>
<dbReference type="PROSITE" id="PS00906">
    <property type="entry name" value="UROD_1"/>
    <property type="match status" value="1"/>
</dbReference>
<dbReference type="PROSITE" id="PS00907">
    <property type="entry name" value="UROD_2"/>
    <property type="match status" value="1"/>
</dbReference>
<protein>
    <recommendedName>
        <fullName evidence="1">Uroporphyrinogen decarboxylase</fullName>
        <shortName evidence="1">UPD</shortName>
        <shortName evidence="1">URO-D</shortName>
        <ecNumber evidence="1">4.1.1.37</ecNumber>
    </recommendedName>
</protein>